<accession>Q8BLQ9</accession>
<accession>B1B1A5</accession>
<accession>B1B1A6</accession>
<accession>B2RTL0</accession>
<accession>Q8BXJ7</accession>
<accession>Q8BYP1</accession>
<accession>Q8BZP4</accession>
<keyword id="KW-0002">3D-structure</keyword>
<keyword id="KW-0025">Alternative splicing</keyword>
<keyword id="KW-0130">Cell adhesion</keyword>
<keyword id="KW-1003">Cell membrane</keyword>
<keyword id="KW-0966">Cell projection</keyword>
<keyword id="KW-1015">Disulfide bond</keyword>
<keyword id="KW-0325">Glycoprotein</keyword>
<keyword id="KW-0393">Immunoglobulin domain</keyword>
<keyword id="KW-0472">Membrane</keyword>
<keyword id="KW-0597">Phosphoprotein</keyword>
<keyword id="KW-1185">Reference proteome</keyword>
<keyword id="KW-0677">Repeat</keyword>
<keyword id="KW-0732">Signal</keyword>
<keyword id="KW-0770">Synapse</keyword>
<keyword id="KW-0812">Transmembrane</keyword>
<keyword id="KW-1133">Transmembrane helix</keyword>
<evidence type="ECO:0000250" key="1"/>
<evidence type="ECO:0000250" key="2">
    <source>
        <dbReference type="UniProtKB" id="Q1WIM2"/>
    </source>
</evidence>
<evidence type="ECO:0000255" key="3"/>
<evidence type="ECO:0000255" key="4">
    <source>
        <dbReference type="PROSITE-ProRule" id="PRU00114"/>
    </source>
</evidence>
<evidence type="ECO:0000256" key="5">
    <source>
        <dbReference type="SAM" id="MobiDB-lite"/>
    </source>
</evidence>
<evidence type="ECO:0000269" key="6">
    <source>
    </source>
</evidence>
<evidence type="ECO:0000303" key="7">
    <source>
    </source>
</evidence>
<evidence type="ECO:0000303" key="8">
    <source>
    </source>
</evidence>
<evidence type="ECO:0000305" key="9"/>
<evidence type="ECO:0007829" key="10">
    <source>
        <dbReference type="PDB" id="3M45"/>
    </source>
</evidence>
<protein>
    <recommendedName>
        <fullName>Cell adhesion molecule 2</fullName>
    </recommendedName>
    <alternativeName>
        <fullName>Immunoglobulin superfamily member 4D</fullName>
        <shortName>IgSF4D</shortName>
    </alternativeName>
    <alternativeName>
        <fullName>Nectin-like protein 3</fullName>
        <shortName>NECL-3</shortName>
    </alternativeName>
    <alternativeName>
        <fullName>Synaptic cell adhesion molecule 2</fullName>
        <shortName>SynCAM 2</shortName>
    </alternativeName>
</protein>
<dbReference type="EMBL" id="AK038842">
    <property type="protein sequence ID" value="BAC30148.1"/>
    <property type="molecule type" value="mRNA"/>
</dbReference>
<dbReference type="EMBL" id="AK046800">
    <property type="protein sequence ID" value="BAC32876.1"/>
    <property type="molecule type" value="mRNA"/>
</dbReference>
<dbReference type="EMBL" id="AK033973">
    <property type="protein sequence ID" value="BAC28533.1"/>
    <property type="molecule type" value="mRNA"/>
</dbReference>
<dbReference type="EMBL" id="AK043760">
    <property type="protein sequence ID" value="BAC31646.1"/>
    <property type="molecule type" value="mRNA"/>
</dbReference>
<dbReference type="EMBL" id="AC154674">
    <property type="status" value="NOT_ANNOTATED_CDS"/>
    <property type="molecule type" value="Genomic_DNA"/>
</dbReference>
<dbReference type="EMBL" id="AC105980">
    <property type="status" value="NOT_ANNOTATED_CDS"/>
    <property type="molecule type" value="Genomic_DNA"/>
</dbReference>
<dbReference type="EMBL" id="AC109233">
    <property type="status" value="NOT_ANNOTATED_CDS"/>
    <property type="molecule type" value="Genomic_DNA"/>
</dbReference>
<dbReference type="EMBL" id="AC154196">
    <property type="status" value="NOT_ANNOTATED_CDS"/>
    <property type="molecule type" value="Genomic_DNA"/>
</dbReference>
<dbReference type="EMBL" id="AC154428">
    <property type="status" value="NOT_ANNOTATED_CDS"/>
    <property type="molecule type" value="Genomic_DNA"/>
</dbReference>
<dbReference type="EMBL" id="CT010571">
    <property type="status" value="NOT_ANNOTATED_CDS"/>
    <property type="molecule type" value="Genomic_DNA"/>
</dbReference>
<dbReference type="EMBL" id="BC139401">
    <property type="protein sequence ID" value="AAI39402.1"/>
    <property type="molecule type" value="mRNA"/>
</dbReference>
<dbReference type="EMBL" id="BC139402">
    <property type="protein sequence ID" value="AAI39403.1"/>
    <property type="molecule type" value="mRNA"/>
</dbReference>
<dbReference type="CCDS" id="CCDS28270.1">
    <molecule id="Q8BLQ9-2"/>
</dbReference>
<dbReference type="CCDS" id="CCDS49885.1">
    <molecule id="Q8BLQ9-3"/>
</dbReference>
<dbReference type="CCDS" id="CCDS84251.1">
    <molecule id="Q8BLQ9-1"/>
</dbReference>
<dbReference type="RefSeq" id="NP_001139449.1">
    <molecule id="Q8BLQ9-3"/>
    <property type="nucleotide sequence ID" value="NM_001145977.1"/>
</dbReference>
<dbReference type="RefSeq" id="NP_001334176.1">
    <molecule id="Q8BLQ9-1"/>
    <property type="nucleotide sequence ID" value="NM_001347247.1"/>
</dbReference>
<dbReference type="RefSeq" id="NP_848836.2">
    <molecule id="Q8BLQ9-2"/>
    <property type="nucleotide sequence ID" value="NM_178721.4"/>
</dbReference>
<dbReference type="PDB" id="3M45">
    <property type="method" value="X-ray"/>
    <property type="resolution" value="2.21 A"/>
    <property type="chains" value="A/B/C/D=21-124"/>
</dbReference>
<dbReference type="PDBsum" id="3M45"/>
<dbReference type="SMR" id="Q8BLQ9"/>
<dbReference type="BioGRID" id="232137">
    <property type="interactions" value="2"/>
</dbReference>
<dbReference type="FunCoup" id="Q8BLQ9">
    <property type="interactions" value="689"/>
</dbReference>
<dbReference type="IntAct" id="Q8BLQ9">
    <property type="interactions" value="1"/>
</dbReference>
<dbReference type="STRING" id="10090.ENSMUSP00000113500"/>
<dbReference type="GlyConnect" id="2421">
    <molecule id="Q8BLQ9-2"/>
    <property type="glycosylation" value="9 N-Linked glycans (3 sites)"/>
</dbReference>
<dbReference type="GlyCosmos" id="Q8BLQ9">
    <property type="glycosylation" value="3 sites, No reported glycans"/>
</dbReference>
<dbReference type="GlyGen" id="Q8BLQ9">
    <property type="glycosylation" value="6 sites, 6 N-linked glycans (5 sites), 1 O-linked glycan (1 site)"/>
</dbReference>
<dbReference type="iPTMnet" id="Q8BLQ9"/>
<dbReference type="PhosphoSitePlus" id="Q8BLQ9"/>
<dbReference type="SwissPalm" id="Q8BLQ9"/>
<dbReference type="PeptideAtlas" id="Q8BLQ9"/>
<dbReference type="ProteomicsDB" id="273893">
    <molecule id="Q8BLQ9-1"/>
</dbReference>
<dbReference type="ProteomicsDB" id="273894">
    <molecule id="Q8BLQ9-2"/>
</dbReference>
<dbReference type="ProteomicsDB" id="273895">
    <molecule id="Q8BLQ9-3"/>
</dbReference>
<dbReference type="Antibodypedia" id="2209">
    <property type="antibodies" value="206 antibodies from 26 providers"/>
</dbReference>
<dbReference type="DNASU" id="239857"/>
<dbReference type="Ensembl" id="ENSMUST00000114292.8">
    <molecule id="Q8BLQ9-2"/>
    <property type="protein sequence ID" value="ENSMUSP00000109931.2"/>
    <property type="gene ID" value="ENSMUSG00000064115.14"/>
</dbReference>
<dbReference type="Ensembl" id="ENSMUST00000120594.8">
    <molecule id="Q8BLQ9-1"/>
    <property type="protein sequence ID" value="ENSMUSP00000113500.2"/>
    <property type="gene ID" value="ENSMUSG00000064115.14"/>
</dbReference>
<dbReference type="Ensembl" id="ENSMUST00000120898.8">
    <molecule id="Q8BLQ9-3"/>
    <property type="protein sequence ID" value="ENSMUSP00000113178.2"/>
    <property type="gene ID" value="ENSMUSG00000064115.14"/>
</dbReference>
<dbReference type="GeneID" id="239857"/>
<dbReference type="KEGG" id="mmu:239857"/>
<dbReference type="UCSC" id="uc007zqn.2">
    <molecule id="Q8BLQ9-2"/>
    <property type="organism name" value="mouse"/>
</dbReference>
<dbReference type="UCSC" id="uc007zqo.2">
    <molecule id="Q8BLQ9-3"/>
    <property type="organism name" value="mouse"/>
</dbReference>
<dbReference type="AGR" id="MGI:2442722"/>
<dbReference type="CTD" id="253559"/>
<dbReference type="MGI" id="MGI:2442722">
    <property type="gene designation" value="Cadm2"/>
</dbReference>
<dbReference type="VEuPathDB" id="HostDB:ENSMUSG00000064115"/>
<dbReference type="GeneTree" id="ENSGT00940000155947"/>
<dbReference type="HOGENOM" id="CLU_047574_2_1_1"/>
<dbReference type="InParanoid" id="Q8BLQ9"/>
<dbReference type="OMA" id="CEVFHET"/>
<dbReference type="OrthoDB" id="10028801at2759"/>
<dbReference type="PhylomeDB" id="Q8BLQ9"/>
<dbReference type="TreeFam" id="TF326804"/>
<dbReference type="Reactome" id="R-MMU-418990">
    <property type="pathway name" value="Adherens junctions interactions"/>
</dbReference>
<dbReference type="BioGRID-ORCS" id="239857">
    <property type="hits" value="4 hits in 77 CRISPR screens"/>
</dbReference>
<dbReference type="ChiTaRS" id="Cadm2">
    <property type="organism name" value="mouse"/>
</dbReference>
<dbReference type="EvolutionaryTrace" id="Q8BLQ9"/>
<dbReference type="PRO" id="PR:Q8BLQ9"/>
<dbReference type="Proteomes" id="UP000000589">
    <property type="component" value="Chromosome 16"/>
</dbReference>
<dbReference type="RNAct" id="Q8BLQ9">
    <property type="molecule type" value="protein"/>
</dbReference>
<dbReference type="Bgee" id="ENSMUSG00000064115">
    <property type="expression patterns" value="Expressed in primary motor cortex and 163 other cell types or tissues"/>
</dbReference>
<dbReference type="ExpressionAtlas" id="Q8BLQ9">
    <property type="expression patterns" value="baseline and differential"/>
</dbReference>
<dbReference type="GO" id="GO:0030424">
    <property type="term" value="C:axon"/>
    <property type="evidence" value="ECO:0007669"/>
    <property type="project" value="UniProtKB-SubCell"/>
</dbReference>
<dbReference type="GO" id="GO:0005886">
    <property type="term" value="C:plasma membrane"/>
    <property type="evidence" value="ECO:0007669"/>
    <property type="project" value="UniProtKB-SubCell"/>
</dbReference>
<dbReference type="GO" id="GO:0045202">
    <property type="term" value="C:synapse"/>
    <property type="evidence" value="ECO:0007669"/>
    <property type="project" value="UniProtKB-SubCell"/>
</dbReference>
<dbReference type="GO" id="GO:0007155">
    <property type="term" value="P:cell adhesion"/>
    <property type="evidence" value="ECO:0007669"/>
    <property type="project" value="UniProtKB-KW"/>
</dbReference>
<dbReference type="CDD" id="cd05884">
    <property type="entry name" value="IgI_2_Necl-3"/>
    <property type="match status" value="1"/>
</dbReference>
<dbReference type="CDD" id="cd07701">
    <property type="entry name" value="IgV_1_Necl-3"/>
    <property type="match status" value="1"/>
</dbReference>
<dbReference type="FunFam" id="2.60.40.10:FF:000013">
    <property type="entry name" value="cell adhesion molecule 1 isoform X1"/>
    <property type="match status" value="1"/>
</dbReference>
<dbReference type="FunFam" id="2.60.40.10:FF:000446">
    <property type="entry name" value="cell adhesion molecule 2 isoform X1"/>
    <property type="match status" value="1"/>
</dbReference>
<dbReference type="FunFam" id="2.60.40.10:FF:000449">
    <property type="entry name" value="cell adhesion molecule 2 isoform X1"/>
    <property type="match status" value="1"/>
</dbReference>
<dbReference type="Gene3D" id="2.60.40.10">
    <property type="entry name" value="Immunoglobulins"/>
    <property type="match status" value="3"/>
</dbReference>
<dbReference type="InterPro" id="IPR013162">
    <property type="entry name" value="CD80_C2-set"/>
</dbReference>
<dbReference type="InterPro" id="IPR007110">
    <property type="entry name" value="Ig-like_dom"/>
</dbReference>
<dbReference type="InterPro" id="IPR036179">
    <property type="entry name" value="Ig-like_dom_sf"/>
</dbReference>
<dbReference type="InterPro" id="IPR013783">
    <property type="entry name" value="Ig-like_fold"/>
</dbReference>
<dbReference type="InterPro" id="IPR003599">
    <property type="entry name" value="Ig_sub"/>
</dbReference>
<dbReference type="InterPro" id="IPR003598">
    <property type="entry name" value="Ig_sub2"/>
</dbReference>
<dbReference type="InterPro" id="IPR013106">
    <property type="entry name" value="Ig_V-set"/>
</dbReference>
<dbReference type="InterPro" id="IPR003585">
    <property type="entry name" value="Neurexin-like"/>
</dbReference>
<dbReference type="PANTHER" id="PTHR45889:SF1">
    <property type="entry name" value="CELL ADHESION MOLECULE 2"/>
    <property type="match status" value="1"/>
</dbReference>
<dbReference type="PANTHER" id="PTHR45889">
    <property type="entry name" value="IG-LIKE DOMAIN-CONTAINING PROTEIN"/>
    <property type="match status" value="1"/>
</dbReference>
<dbReference type="Pfam" id="PF08205">
    <property type="entry name" value="C2-set_2"/>
    <property type="match status" value="1"/>
</dbReference>
<dbReference type="Pfam" id="PF13927">
    <property type="entry name" value="Ig_3"/>
    <property type="match status" value="1"/>
</dbReference>
<dbReference type="Pfam" id="PF07686">
    <property type="entry name" value="V-set"/>
    <property type="match status" value="1"/>
</dbReference>
<dbReference type="SMART" id="SM00294">
    <property type="entry name" value="4.1m"/>
    <property type="match status" value="1"/>
</dbReference>
<dbReference type="SMART" id="SM00409">
    <property type="entry name" value="IG"/>
    <property type="match status" value="2"/>
</dbReference>
<dbReference type="SMART" id="SM00408">
    <property type="entry name" value="IGc2"/>
    <property type="match status" value="2"/>
</dbReference>
<dbReference type="SUPFAM" id="SSF48726">
    <property type="entry name" value="Immunoglobulin"/>
    <property type="match status" value="3"/>
</dbReference>
<dbReference type="PROSITE" id="PS50835">
    <property type="entry name" value="IG_LIKE"/>
    <property type="match status" value="3"/>
</dbReference>
<sequence length="435" mass="47559">MIWKRSAVLRFYSVCGLLLQGSQGQFPLTQNVTVVEGGTAILTCRVDQNDNTSLQWSNPAQQTLYFDDKKALRDNRIELVRASWHELSISVSDVSLSDEGQYTCSLFTMPVKTSKAYLTVLGVPEKPQISGFSSPVMEGDLMQLTCKTSGSKPAADIRWFKNDKEIKDVKYLKEEDANRKTFTVSSTLDFRVDRSDDGVAVICRVDHESLNATPQVAMQVLEIHYTPSVKIIPSTPFPQEGQALTLTCESKGKPLPEPVLWTKDGAELPDPDRMVVSGRELNILFLNKTDNGTYRCEATNTIGQSSAEYVLIVHDVPNTLLPTTIIPSLTTAPVTTSVTITTSPSTSASSSSRRDPNSLAGQNGPDHALIGGIVAVVVFVTLCSIFLLGRYLARHKGTYLTNEAKGAEDAPDADTAIINAEGSQVNAEEKKEYFI</sequence>
<name>CADM2_MOUSE</name>
<reference key="1">
    <citation type="journal article" date="2005" name="Science">
        <title>The transcriptional landscape of the mammalian genome.</title>
        <authorList>
            <person name="Carninci P."/>
            <person name="Kasukawa T."/>
            <person name="Katayama S."/>
            <person name="Gough J."/>
            <person name="Frith M.C."/>
            <person name="Maeda N."/>
            <person name="Oyama R."/>
            <person name="Ravasi T."/>
            <person name="Lenhard B."/>
            <person name="Wells C."/>
            <person name="Kodzius R."/>
            <person name="Shimokawa K."/>
            <person name="Bajic V.B."/>
            <person name="Brenner S.E."/>
            <person name="Batalov S."/>
            <person name="Forrest A.R."/>
            <person name="Zavolan M."/>
            <person name="Davis M.J."/>
            <person name="Wilming L.G."/>
            <person name="Aidinis V."/>
            <person name="Allen J.E."/>
            <person name="Ambesi-Impiombato A."/>
            <person name="Apweiler R."/>
            <person name="Aturaliya R.N."/>
            <person name="Bailey T.L."/>
            <person name="Bansal M."/>
            <person name="Baxter L."/>
            <person name="Beisel K.W."/>
            <person name="Bersano T."/>
            <person name="Bono H."/>
            <person name="Chalk A.M."/>
            <person name="Chiu K.P."/>
            <person name="Choudhary V."/>
            <person name="Christoffels A."/>
            <person name="Clutterbuck D.R."/>
            <person name="Crowe M.L."/>
            <person name="Dalla E."/>
            <person name="Dalrymple B.P."/>
            <person name="de Bono B."/>
            <person name="Della Gatta G."/>
            <person name="di Bernardo D."/>
            <person name="Down T."/>
            <person name="Engstrom P."/>
            <person name="Fagiolini M."/>
            <person name="Faulkner G."/>
            <person name="Fletcher C.F."/>
            <person name="Fukushima T."/>
            <person name="Furuno M."/>
            <person name="Futaki S."/>
            <person name="Gariboldi M."/>
            <person name="Georgii-Hemming P."/>
            <person name="Gingeras T.R."/>
            <person name="Gojobori T."/>
            <person name="Green R.E."/>
            <person name="Gustincich S."/>
            <person name="Harbers M."/>
            <person name="Hayashi Y."/>
            <person name="Hensch T.K."/>
            <person name="Hirokawa N."/>
            <person name="Hill D."/>
            <person name="Huminiecki L."/>
            <person name="Iacono M."/>
            <person name="Ikeo K."/>
            <person name="Iwama A."/>
            <person name="Ishikawa T."/>
            <person name="Jakt M."/>
            <person name="Kanapin A."/>
            <person name="Katoh M."/>
            <person name="Kawasawa Y."/>
            <person name="Kelso J."/>
            <person name="Kitamura H."/>
            <person name="Kitano H."/>
            <person name="Kollias G."/>
            <person name="Krishnan S.P."/>
            <person name="Kruger A."/>
            <person name="Kummerfeld S.K."/>
            <person name="Kurochkin I.V."/>
            <person name="Lareau L.F."/>
            <person name="Lazarevic D."/>
            <person name="Lipovich L."/>
            <person name="Liu J."/>
            <person name="Liuni S."/>
            <person name="McWilliam S."/>
            <person name="Madan Babu M."/>
            <person name="Madera M."/>
            <person name="Marchionni L."/>
            <person name="Matsuda H."/>
            <person name="Matsuzawa S."/>
            <person name="Miki H."/>
            <person name="Mignone F."/>
            <person name="Miyake S."/>
            <person name="Morris K."/>
            <person name="Mottagui-Tabar S."/>
            <person name="Mulder N."/>
            <person name="Nakano N."/>
            <person name="Nakauchi H."/>
            <person name="Ng P."/>
            <person name="Nilsson R."/>
            <person name="Nishiguchi S."/>
            <person name="Nishikawa S."/>
            <person name="Nori F."/>
            <person name="Ohara O."/>
            <person name="Okazaki Y."/>
            <person name="Orlando V."/>
            <person name="Pang K.C."/>
            <person name="Pavan W.J."/>
            <person name="Pavesi G."/>
            <person name="Pesole G."/>
            <person name="Petrovsky N."/>
            <person name="Piazza S."/>
            <person name="Reed J."/>
            <person name="Reid J.F."/>
            <person name="Ring B.Z."/>
            <person name="Ringwald M."/>
            <person name="Rost B."/>
            <person name="Ruan Y."/>
            <person name="Salzberg S.L."/>
            <person name="Sandelin A."/>
            <person name="Schneider C."/>
            <person name="Schoenbach C."/>
            <person name="Sekiguchi K."/>
            <person name="Semple C.A."/>
            <person name="Seno S."/>
            <person name="Sessa L."/>
            <person name="Sheng Y."/>
            <person name="Shibata Y."/>
            <person name="Shimada H."/>
            <person name="Shimada K."/>
            <person name="Silva D."/>
            <person name="Sinclair B."/>
            <person name="Sperling S."/>
            <person name="Stupka E."/>
            <person name="Sugiura K."/>
            <person name="Sultana R."/>
            <person name="Takenaka Y."/>
            <person name="Taki K."/>
            <person name="Tammoja K."/>
            <person name="Tan S.L."/>
            <person name="Tang S."/>
            <person name="Taylor M.S."/>
            <person name="Tegner J."/>
            <person name="Teichmann S.A."/>
            <person name="Ueda H.R."/>
            <person name="van Nimwegen E."/>
            <person name="Verardo R."/>
            <person name="Wei C.L."/>
            <person name="Yagi K."/>
            <person name="Yamanishi H."/>
            <person name="Zabarovsky E."/>
            <person name="Zhu S."/>
            <person name="Zimmer A."/>
            <person name="Hide W."/>
            <person name="Bult C."/>
            <person name="Grimmond S.M."/>
            <person name="Teasdale R.D."/>
            <person name="Liu E.T."/>
            <person name="Brusic V."/>
            <person name="Quackenbush J."/>
            <person name="Wahlestedt C."/>
            <person name="Mattick J.S."/>
            <person name="Hume D.A."/>
            <person name="Kai C."/>
            <person name="Sasaki D."/>
            <person name="Tomaru Y."/>
            <person name="Fukuda S."/>
            <person name="Kanamori-Katayama M."/>
            <person name="Suzuki M."/>
            <person name="Aoki J."/>
            <person name="Arakawa T."/>
            <person name="Iida J."/>
            <person name="Imamura K."/>
            <person name="Itoh M."/>
            <person name="Kato T."/>
            <person name="Kawaji H."/>
            <person name="Kawagashira N."/>
            <person name="Kawashima T."/>
            <person name="Kojima M."/>
            <person name="Kondo S."/>
            <person name="Konno H."/>
            <person name="Nakano K."/>
            <person name="Ninomiya N."/>
            <person name="Nishio T."/>
            <person name="Okada M."/>
            <person name="Plessy C."/>
            <person name="Shibata K."/>
            <person name="Shiraki T."/>
            <person name="Suzuki S."/>
            <person name="Tagami M."/>
            <person name="Waki K."/>
            <person name="Watahiki A."/>
            <person name="Okamura-Oho Y."/>
            <person name="Suzuki H."/>
            <person name="Kawai J."/>
            <person name="Hayashizaki Y."/>
        </authorList>
    </citation>
    <scope>NUCLEOTIDE SEQUENCE [LARGE SCALE MRNA] (ISOFORMS 2 AND 3)</scope>
    <source>
        <strain>C57BL/6J</strain>
        <tissue>Brain cortex</tissue>
        <tissue>Diencephalon</tissue>
        <tissue>Hypothalamus</tissue>
        <tissue>Medulla oblongata</tissue>
    </source>
</reference>
<reference key="2">
    <citation type="journal article" date="2009" name="PLoS Biol.">
        <title>Lineage-specific biology revealed by a finished genome assembly of the mouse.</title>
        <authorList>
            <person name="Church D.M."/>
            <person name="Goodstadt L."/>
            <person name="Hillier L.W."/>
            <person name="Zody M.C."/>
            <person name="Goldstein S."/>
            <person name="She X."/>
            <person name="Bult C.J."/>
            <person name="Agarwala R."/>
            <person name="Cherry J.L."/>
            <person name="DiCuccio M."/>
            <person name="Hlavina W."/>
            <person name="Kapustin Y."/>
            <person name="Meric P."/>
            <person name="Maglott D."/>
            <person name="Birtle Z."/>
            <person name="Marques A.C."/>
            <person name="Graves T."/>
            <person name="Zhou S."/>
            <person name="Teague B."/>
            <person name="Potamousis K."/>
            <person name="Churas C."/>
            <person name="Place M."/>
            <person name="Herschleb J."/>
            <person name="Runnheim R."/>
            <person name="Forrest D."/>
            <person name="Amos-Landgraf J."/>
            <person name="Schwartz D.C."/>
            <person name="Cheng Z."/>
            <person name="Lindblad-Toh K."/>
            <person name="Eichler E.E."/>
            <person name="Ponting C.P."/>
        </authorList>
    </citation>
    <scope>NUCLEOTIDE SEQUENCE [LARGE SCALE GENOMIC DNA]</scope>
    <source>
        <strain>C57BL/6J</strain>
    </source>
</reference>
<reference key="3">
    <citation type="journal article" date="2004" name="Genome Res.">
        <title>The status, quality, and expansion of the NIH full-length cDNA project: the Mammalian Gene Collection (MGC).</title>
        <authorList>
            <consortium name="The MGC Project Team"/>
        </authorList>
    </citation>
    <scope>NUCLEOTIDE SEQUENCE [LARGE SCALE MRNA] (ISOFORM 2)</scope>
    <source>
        <tissue>Brain</tissue>
    </source>
</reference>
<reference key="4">
    <citation type="journal article" date="2010" name="Cell">
        <title>A tissue-specific atlas of mouse protein phosphorylation and expression.</title>
        <authorList>
            <person name="Huttlin E.L."/>
            <person name="Jedrychowski M.P."/>
            <person name="Elias J.E."/>
            <person name="Goswami T."/>
            <person name="Rad R."/>
            <person name="Beausoleil S.A."/>
            <person name="Villen J."/>
            <person name="Haas W."/>
            <person name="Sowa M.E."/>
            <person name="Gygi S.P."/>
        </authorList>
    </citation>
    <scope>IDENTIFICATION BY MASS SPECTROMETRY [LARGE SCALE ANALYSIS]</scope>
    <source>
        <tissue>Brain</tissue>
    </source>
</reference>
<reference key="5">
    <citation type="journal article" date="2010" name="J. Biol. Chem.">
        <title>N-glycosylation at the SynCAM (synaptic cell adhesion molecule) immunoglobulin interface modulates synaptic adhesion.</title>
        <authorList>
            <person name="Fogel A.I."/>
            <person name="Li Y."/>
            <person name="Giza J."/>
            <person name="Wang Q."/>
            <person name="Lam T.T."/>
            <person name="Modis Y."/>
            <person name="Biederer T."/>
        </authorList>
    </citation>
    <scope>X-RAY CRYSTALLOGRAPHY (2.21 ANGSTROMS) OF 21-124</scope>
    <scope>GLYCOSYLATION AT ASN-31 AND ASN-51</scope>
    <scope>DISULFIDE BOND</scope>
</reference>
<gene>
    <name type="primary">Cadm2</name>
    <name type="synonym">Igsf4d</name>
    <name type="synonym">Necl3</name>
</gene>
<comment type="function">
    <text evidence="1">Adhesion molecule that engages in homo- and heterophilic interactions with the other nectin-like family members, leading to cell aggregation. Important for synapse organization, providing regulated trans-synaptic adhesion. Preferentially binds to oligodendrocytes (By similarity).</text>
</comment>
<comment type="subcellular location">
    <subcellularLocation>
        <location evidence="1">Cell membrane</location>
        <topology>Single-pass type I membrane protein</topology>
    </subcellularLocation>
    <subcellularLocation>
        <location evidence="1">Synapse</location>
    </subcellularLocation>
    <subcellularLocation>
        <location evidence="1">Cell projection</location>
        <location evidence="1">Axon</location>
    </subcellularLocation>
    <text evidence="1">Found in the axoplasm of myelinated axons.</text>
</comment>
<comment type="alternative products">
    <event type="alternative splicing"/>
    <isoform>
        <id>Q8BLQ9-1</id>
        <name>1</name>
        <sequence type="displayed"/>
    </isoform>
    <isoform>
        <id>Q8BLQ9-2</id>
        <name>2</name>
        <sequence type="described" ref="VSP_026336 VSP_026337"/>
    </isoform>
    <isoform>
        <id>Q8BLQ9-3</id>
        <name>3</name>
        <sequence type="described" ref="VSP_026337"/>
    </isoform>
</comment>
<comment type="PTM">
    <text evidence="6">Glycosylation at Asn-51 reduces adhesive binding.</text>
</comment>
<comment type="similarity">
    <text evidence="9">Belongs to the nectin family.</text>
</comment>
<feature type="signal peptide" evidence="3">
    <location>
        <begin position="1"/>
        <end position="24"/>
    </location>
</feature>
<feature type="chain" id="PRO_0000291971" description="Cell adhesion molecule 2">
    <location>
        <begin position="25"/>
        <end position="435"/>
    </location>
</feature>
<feature type="topological domain" description="Extracellular" evidence="3">
    <location>
        <begin position="25"/>
        <end position="367"/>
    </location>
</feature>
<feature type="transmembrane region" description="Helical" evidence="3">
    <location>
        <begin position="368"/>
        <end position="388"/>
    </location>
</feature>
<feature type="topological domain" description="Cytoplasmic" evidence="3">
    <location>
        <begin position="389"/>
        <end position="435"/>
    </location>
</feature>
<feature type="domain" description="Ig-like V-type">
    <location>
        <begin position="27"/>
        <end position="119"/>
    </location>
</feature>
<feature type="domain" description="Ig-like C2-type 1">
    <location>
        <begin position="127"/>
        <end position="219"/>
    </location>
</feature>
<feature type="domain" description="Ig-like C2-type 2">
    <location>
        <begin position="227"/>
        <end position="312"/>
    </location>
</feature>
<feature type="region of interest" description="Disordered" evidence="5">
    <location>
        <begin position="337"/>
        <end position="360"/>
    </location>
</feature>
<feature type="compositionally biased region" description="Low complexity" evidence="5">
    <location>
        <begin position="337"/>
        <end position="351"/>
    </location>
</feature>
<feature type="modified residue" description="Phosphoserine" evidence="2">
    <location>
        <position position="423"/>
    </location>
</feature>
<feature type="glycosylation site" description="N-linked (GlcNAc...) asparagine" evidence="6">
    <location>
        <position position="31"/>
    </location>
</feature>
<feature type="glycosylation site" description="N-linked (GlcNAc...) asparagine" evidence="6">
    <location>
        <position position="51"/>
    </location>
</feature>
<feature type="glycosylation site" description="N-linked (GlcNAc...) asparagine" evidence="3">
    <location>
        <position position="291"/>
    </location>
</feature>
<feature type="disulfide bond" evidence="4 6">
    <location>
        <begin position="44"/>
        <end position="104"/>
    </location>
</feature>
<feature type="disulfide bond" evidence="4">
    <location>
        <begin position="146"/>
        <end position="203"/>
    </location>
</feature>
<feature type="disulfide bond" evidence="4">
    <location>
        <begin position="248"/>
        <end position="296"/>
    </location>
</feature>
<feature type="splice variant" id="VSP_026336" description="In isoform 2." evidence="7 8">
    <original>Q</original>
    <variation>QAAASKSKVK</variation>
    <location>
        <position position="20"/>
    </location>
</feature>
<feature type="splice variant" id="VSP_026337" description="In isoform 2 and isoform 3." evidence="7 8">
    <location>
        <begin position="315"/>
        <end position="354"/>
    </location>
</feature>
<feature type="sequence conflict" description="In Ref. 1; BAC30148." evidence="9" ref="1">
    <original>E</original>
    <variation>K</variation>
    <location>
        <position position="297"/>
    </location>
</feature>
<feature type="sequence conflict" description="In Ref. 1; BAC28533." evidence="9" ref="1">
    <original>E</original>
    <variation>K</variation>
    <location>
        <position position="308"/>
    </location>
</feature>
<feature type="strand" evidence="10">
    <location>
        <begin position="32"/>
        <end position="35"/>
    </location>
</feature>
<feature type="strand" evidence="10">
    <location>
        <begin position="40"/>
        <end position="48"/>
    </location>
</feature>
<feature type="strand" evidence="10">
    <location>
        <begin position="54"/>
        <end position="57"/>
    </location>
</feature>
<feature type="strand" evidence="10">
    <location>
        <begin position="63"/>
        <end position="66"/>
    </location>
</feature>
<feature type="strand" evidence="10">
    <location>
        <begin position="77"/>
        <end position="91"/>
    </location>
</feature>
<feature type="helix" evidence="10">
    <location>
        <begin position="96"/>
        <end position="98"/>
    </location>
</feature>
<feature type="strand" evidence="10">
    <location>
        <begin position="100"/>
        <end position="106"/>
    </location>
</feature>
<feature type="strand" evidence="10">
    <location>
        <begin position="108"/>
        <end position="110"/>
    </location>
</feature>
<feature type="strand" evidence="10">
    <location>
        <begin position="112"/>
        <end position="121"/>
    </location>
</feature>
<organism>
    <name type="scientific">Mus musculus</name>
    <name type="common">Mouse</name>
    <dbReference type="NCBI Taxonomy" id="10090"/>
    <lineage>
        <taxon>Eukaryota</taxon>
        <taxon>Metazoa</taxon>
        <taxon>Chordata</taxon>
        <taxon>Craniata</taxon>
        <taxon>Vertebrata</taxon>
        <taxon>Euteleostomi</taxon>
        <taxon>Mammalia</taxon>
        <taxon>Eutheria</taxon>
        <taxon>Euarchontoglires</taxon>
        <taxon>Glires</taxon>
        <taxon>Rodentia</taxon>
        <taxon>Myomorpha</taxon>
        <taxon>Muroidea</taxon>
        <taxon>Muridae</taxon>
        <taxon>Murinae</taxon>
        <taxon>Mus</taxon>
        <taxon>Mus</taxon>
    </lineage>
</organism>
<proteinExistence type="evidence at protein level"/>